<sequence>MSAQPVDIQIFGRSLRVNCPPEQQDALNQAAEDLNQRLQDLKVRTRVTNTEQLVFIAALNVCHELAQERGKTRDYASNMEQRIRMLQQTIEQALLEQGRITERQGAQFE</sequence>
<proteinExistence type="inferred from homology"/>
<evidence type="ECO:0000255" key="1">
    <source>
        <dbReference type="HAMAP-Rule" id="MF_02012"/>
    </source>
</evidence>
<gene>
    <name evidence="1" type="primary">zapA</name>
    <name type="ordered locus">PC1_0446</name>
</gene>
<comment type="function">
    <text evidence="1">Activator of cell division through the inhibition of FtsZ GTPase activity, therefore promoting FtsZ assembly into bundles of protofilaments necessary for the formation of the division Z ring. It is recruited early at mid-cell but it is not essential for cell division.</text>
</comment>
<comment type="subunit">
    <text evidence="1">Homodimer. Interacts with FtsZ.</text>
</comment>
<comment type="subcellular location">
    <subcellularLocation>
        <location evidence="1">Cytoplasm</location>
    </subcellularLocation>
    <text evidence="1">Localizes at mid-cell.</text>
</comment>
<comment type="similarity">
    <text evidence="1">Belongs to the ZapA family. Type 1 subfamily.</text>
</comment>
<reference key="1">
    <citation type="submission" date="2009-07" db="EMBL/GenBank/DDBJ databases">
        <title>Complete sequence of Pectobacterium carotovorum subsp. carotovorum PC1.</title>
        <authorList>
            <consortium name="US DOE Joint Genome Institute"/>
            <person name="Lucas S."/>
            <person name="Copeland A."/>
            <person name="Lapidus A."/>
            <person name="Glavina del Rio T."/>
            <person name="Tice H."/>
            <person name="Bruce D."/>
            <person name="Goodwin L."/>
            <person name="Pitluck S."/>
            <person name="Munk A.C."/>
            <person name="Brettin T."/>
            <person name="Detter J.C."/>
            <person name="Han C."/>
            <person name="Tapia R."/>
            <person name="Larimer F."/>
            <person name="Land M."/>
            <person name="Hauser L."/>
            <person name="Kyrpides N."/>
            <person name="Mikhailova N."/>
            <person name="Balakrishnan V."/>
            <person name="Glasner J."/>
            <person name="Perna N.T."/>
        </authorList>
    </citation>
    <scope>NUCLEOTIDE SEQUENCE [LARGE SCALE GENOMIC DNA]</scope>
    <source>
        <strain>PC1</strain>
    </source>
</reference>
<protein>
    <recommendedName>
        <fullName evidence="1">Cell division protein ZapA</fullName>
    </recommendedName>
    <alternativeName>
        <fullName evidence="1">Z ring-associated protein ZapA</fullName>
    </alternativeName>
</protein>
<keyword id="KW-0131">Cell cycle</keyword>
<keyword id="KW-0132">Cell division</keyword>
<keyword id="KW-0175">Coiled coil</keyword>
<keyword id="KW-0963">Cytoplasm</keyword>
<keyword id="KW-0717">Septation</keyword>
<feature type="chain" id="PRO_1000216412" description="Cell division protein ZapA">
    <location>
        <begin position="1"/>
        <end position="109"/>
    </location>
</feature>
<feature type="coiled-coil region" evidence="1">
    <location>
        <begin position="21"/>
        <end position="99"/>
    </location>
</feature>
<dbReference type="EMBL" id="CP001657">
    <property type="protein sequence ID" value="ACT11502.1"/>
    <property type="molecule type" value="Genomic_DNA"/>
</dbReference>
<dbReference type="RefSeq" id="WP_012773157.1">
    <property type="nucleotide sequence ID" value="NC_012917.1"/>
</dbReference>
<dbReference type="SMR" id="C6DJT9"/>
<dbReference type="STRING" id="561230.PC1_0446"/>
<dbReference type="GeneID" id="67795736"/>
<dbReference type="KEGG" id="pct:PC1_0446"/>
<dbReference type="eggNOG" id="COG3027">
    <property type="taxonomic scope" value="Bacteria"/>
</dbReference>
<dbReference type="HOGENOM" id="CLU_116623_3_0_6"/>
<dbReference type="OrthoDB" id="5917174at2"/>
<dbReference type="Proteomes" id="UP000002736">
    <property type="component" value="Chromosome"/>
</dbReference>
<dbReference type="GO" id="GO:0032153">
    <property type="term" value="C:cell division site"/>
    <property type="evidence" value="ECO:0007669"/>
    <property type="project" value="TreeGrafter"/>
</dbReference>
<dbReference type="GO" id="GO:0030428">
    <property type="term" value="C:cell septum"/>
    <property type="evidence" value="ECO:0007669"/>
    <property type="project" value="TreeGrafter"/>
</dbReference>
<dbReference type="GO" id="GO:0005829">
    <property type="term" value="C:cytosol"/>
    <property type="evidence" value="ECO:0007669"/>
    <property type="project" value="TreeGrafter"/>
</dbReference>
<dbReference type="GO" id="GO:0005886">
    <property type="term" value="C:plasma membrane"/>
    <property type="evidence" value="ECO:0007669"/>
    <property type="project" value="UniProtKB-UniRule"/>
</dbReference>
<dbReference type="GO" id="GO:0000917">
    <property type="term" value="P:division septum assembly"/>
    <property type="evidence" value="ECO:0007669"/>
    <property type="project" value="UniProtKB-KW"/>
</dbReference>
<dbReference type="GO" id="GO:0043093">
    <property type="term" value="P:FtsZ-dependent cytokinesis"/>
    <property type="evidence" value="ECO:0007669"/>
    <property type="project" value="TreeGrafter"/>
</dbReference>
<dbReference type="GO" id="GO:0000921">
    <property type="term" value="P:septin ring assembly"/>
    <property type="evidence" value="ECO:0007669"/>
    <property type="project" value="TreeGrafter"/>
</dbReference>
<dbReference type="FunFam" id="1.20.5.50:FF:000001">
    <property type="entry name" value="Cell division protein ZapA"/>
    <property type="match status" value="1"/>
</dbReference>
<dbReference type="FunFam" id="3.30.160.880:FF:000001">
    <property type="entry name" value="Cell division protein ZapA"/>
    <property type="match status" value="1"/>
</dbReference>
<dbReference type="Gene3D" id="1.20.5.50">
    <property type="match status" value="1"/>
</dbReference>
<dbReference type="Gene3D" id="3.30.160.880">
    <property type="entry name" value="Cell division protein ZapA protomer, N-terminal domain"/>
    <property type="match status" value="1"/>
</dbReference>
<dbReference type="HAMAP" id="MF_02012">
    <property type="entry name" value="ZapA_type1"/>
    <property type="match status" value="1"/>
</dbReference>
<dbReference type="InterPro" id="IPR007838">
    <property type="entry name" value="Cell_div_ZapA-like"/>
</dbReference>
<dbReference type="InterPro" id="IPR036192">
    <property type="entry name" value="Cell_div_ZapA-like_sf"/>
</dbReference>
<dbReference type="InterPro" id="IPR023771">
    <property type="entry name" value="Cell_div_ZapA_eubact"/>
</dbReference>
<dbReference type="InterPro" id="IPR042233">
    <property type="entry name" value="Cell_div_ZapA_N"/>
</dbReference>
<dbReference type="NCBIfam" id="NF008209">
    <property type="entry name" value="PRK10972.1"/>
    <property type="match status" value="1"/>
</dbReference>
<dbReference type="PANTHER" id="PTHR34981">
    <property type="entry name" value="CELL DIVISION PROTEIN ZAPA"/>
    <property type="match status" value="1"/>
</dbReference>
<dbReference type="PANTHER" id="PTHR34981:SF1">
    <property type="entry name" value="CELL DIVISION PROTEIN ZAPA"/>
    <property type="match status" value="1"/>
</dbReference>
<dbReference type="Pfam" id="PF05164">
    <property type="entry name" value="ZapA"/>
    <property type="match status" value="1"/>
</dbReference>
<dbReference type="SUPFAM" id="SSF102829">
    <property type="entry name" value="Cell division protein ZapA-like"/>
    <property type="match status" value="1"/>
</dbReference>
<accession>C6DJT9</accession>
<name>ZAPA_PECCP</name>
<organism>
    <name type="scientific">Pectobacterium carotovorum subsp. carotovorum (strain PC1)</name>
    <dbReference type="NCBI Taxonomy" id="561230"/>
    <lineage>
        <taxon>Bacteria</taxon>
        <taxon>Pseudomonadati</taxon>
        <taxon>Pseudomonadota</taxon>
        <taxon>Gammaproteobacteria</taxon>
        <taxon>Enterobacterales</taxon>
        <taxon>Pectobacteriaceae</taxon>
        <taxon>Pectobacterium</taxon>
    </lineage>
</organism>